<reference key="1">
    <citation type="journal article" date="1996" name="DNA Res.">
        <title>Prediction of the coding sequences of unidentified human genes. VI. The coding sequences of 80 new genes (KIAA0201-KIAA0280) deduced by analysis of cDNA clones from cell line KG-1 and brain.</title>
        <authorList>
            <person name="Nagase T."/>
            <person name="Seki N."/>
            <person name="Ishikawa K."/>
            <person name="Ohira M."/>
            <person name="Kawarabayasi Y."/>
            <person name="Ohara O."/>
            <person name="Tanaka A."/>
            <person name="Kotani H."/>
            <person name="Miyajima N."/>
            <person name="Nomura N."/>
        </authorList>
    </citation>
    <scope>NUCLEOTIDE SEQUENCE [LARGE SCALE MRNA]</scope>
    <source>
        <tissue>Bone marrow</tissue>
    </source>
</reference>
<reference key="2">
    <citation type="submission" date="2005-09" db="EMBL/GenBank/DDBJ databases">
        <authorList>
            <person name="Mural R.J."/>
            <person name="Istrail S."/>
            <person name="Sutton G.G."/>
            <person name="Florea L."/>
            <person name="Halpern A.L."/>
            <person name="Mobarry C.M."/>
            <person name="Lippert R."/>
            <person name="Walenz B."/>
            <person name="Shatkay H."/>
            <person name="Dew I."/>
            <person name="Miller J.R."/>
            <person name="Flanigan M.J."/>
            <person name="Edwards N.J."/>
            <person name="Bolanos R."/>
            <person name="Fasulo D."/>
            <person name="Halldorsson B.V."/>
            <person name="Hannenhalli S."/>
            <person name="Turner R."/>
            <person name="Yooseph S."/>
            <person name="Lu F."/>
            <person name="Nusskern D.R."/>
            <person name="Shue B.C."/>
            <person name="Zheng X.H."/>
            <person name="Zhong F."/>
            <person name="Delcher A.L."/>
            <person name="Huson D.H."/>
            <person name="Kravitz S.A."/>
            <person name="Mouchard L."/>
            <person name="Reinert K."/>
            <person name="Remington K.A."/>
            <person name="Clark A.G."/>
            <person name="Waterman M.S."/>
            <person name="Eichler E.E."/>
            <person name="Adams M.D."/>
            <person name="Hunkapiller M.W."/>
            <person name="Myers E.W."/>
            <person name="Venter J.C."/>
        </authorList>
    </citation>
    <scope>NUCLEOTIDE SEQUENCE [LARGE SCALE GENOMIC DNA]</scope>
</reference>
<reference key="3">
    <citation type="journal article" date="2004" name="Genome Res.">
        <title>The status, quality, and expansion of the NIH full-length cDNA project: the Mammalian Gene Collection (MGC).</title>
        <authorList>
            <consortium name="The MGC Project Team"/>
        </authorList>
    </citation>
    <scope>NUCLEOTIDE SEQUENCE [LARGE SCALE MRNA]</scope>
</reference>
<reference key="4">
    <citation type="journal article" date="2006" name="Cell">
        <title>Global, in vivo, and site-specific phosphorylation dynamics in signaling networks.</title>
        <authorList>
            <person name="Olsen J.V."/>
            <person name="Blagoev B."/>
            <person name="Gnad F."/>
            <person name="Macek B."/>
            <person name="Kumar C."/>
            <person name="Mortensen P."/>
            <person name="Mann M."/>
        </authorList>
    </citation>
    <scope>IDENTIFICATION BY MASS SPECTROMETRY [LARGE SCALE ANALYSIS]</scope>
    <source>
        <tissue>Cervix carcinoma</tissue>
    </source>
</reference>
<reference key="5">
    <citation type="journal article" date="2007" name="J. Biol. Chem.">
        <title>Three mammalian lipins act as phosphatidate phosphatases with distinct tissue expression patterns.</title>
        <authorList>
            <person name="Donkor J."/>
            <person name="Sariahmetoglu M."/>
            <person name="Dewald J."/>
            <person name="Brindley D.N."/>
            <person name="Reue K."/>
        </authorList>
    </citation>
    <scope>TISSUE SPECIFICITY</scope>
</reference>
<reference key="6">
    <citation type="journal article" date="2008" name="J. Proteome Res.">
        <title>Phosphoproteome of resting human platelets.</title>
        <authorList>
            <person name="Zahedi R.P."/>
            <person name="Lewandrowski U."/>
            <person name="Wiesner J."/>
            <person name="Wortelkamp S."/>
            <person name="Moebius J."/>
            <person name="Schuetz C."/>
            <person name="Walter U."/>
            <person name="Gambaryan S."/>
            <person name="Sickmann A."/>
        </authorList>
    </citation>
    <scope>IDENTIFICATION BY MASS SPECTROMETRY [LARGE SCALE ANALYSIS]</scope>
    <source>
        <tissue>Platelet</tissue>
    </source>
</reference>
<reference key="7">
    <citation type="journal article" date="2009" name="Anal. Chem.">
        <title>Lys-N and trypsin cover complementary parts of the phosphoproteome in a refined SCX-based approach.</title>
        <authorList>
            <person name="Gauci S."/>
            <person name="Helbig A.O."/>
            <person name="Slijper M."/>
            <person name="Krijgsveld J."/>
            <person name="Heck A.J."/>
            <person name="Mohammed S."/>
        </authorList>
    </citation>
    <scope>IDENTIFICATION BY MASS SPECTROMETRY [LARGE SCALE ANALYSIS]</scope>
</reference>
<reference key="8">
    <citation type="journal article" date="2010" name="Sci. Signal.">
        <title>Quantitative phosphoproteomics reveals widespread full phosphorylation site occupancy during mitosis.</title>
        <authorList>
            <person name="Olsen J.V."/>
            <person name="Vermeulen M."/>
            <person name="Santamaria A."/>
            <person name="Kumar C."/>
            <person name="Miller M.L."/>
            <person name="Jensen L.J."/>
            <person name="Gnad F."/>
            <person name="Cox J."/>
            <person name="Jensen T.S."/>
            <person name="Nigg E.A."/>
            <person name="Brunak S."/>
            <person name="Mann M."/>
        </authorList>
    </citation>
    <scope>IDENTIFICATION BY MASS SPECTROMETRY [LARGE SCALE ANALYSIS]</scope>
    <source>
        <tissue>Cervix carcinoma</tissue>
    </source>
</reference>
<reference key="9">
    <citation type="journal article" date="2011" name="Sci. Signal.">
        <title>System-wide temporal characterization of the proteome and phosphoproteome of human embryonic stem cell differentiation.</title>
        <authorList>
            <person name="Rigbolt K.T."/>
            <person name="Prokhorova T.A."/>
            <person name="Akimov V."/>
            <person name="Henningsen J."/>
            <person name="Johansen P.T."/>
            <person name="Kratchmarova I."/>
            <person name="Kassem M."/>
            <person name="Mann M."/>
            <person name="Olsen J.V."/>
            <person name="Blagoev B."/>
        </authorList>
    </citation>
    <scope>IDENTIFICATION BY MASS SPECTROMETRY [LARGE SCALE ANALYSIS]</scope>
</reference>
<reference key="10">
    <citation type="journal article" date="2013" name="J. Proteome Res.">
        <title>Toward a comprehensive characterization of a human cancer cell phosphoproteome.</title>
        <authorList>
            <person name="Zhou H."/>
            <person name="Di Palma S."/>
            <person name="Preisinger C."/>
            <person name="Peng M."/>
            <person name="Polat A.N."/>
            <person name="Heck A.J."/>
            <person name="Mohammed S."/>
        </authorList>
    </citation>
    <scope>PHOSPHORYLATION [LARGE SCALE ANALYSIS] AT SER-106; SER-243 AND SER-303</scope>
    <scope>IDENTIFICATION BY MASS SPECTROMETRY [LARGE SCALE ANALYSIS]</scope>
    <source>
        <tissue>Cervix carcinoma</tissue>
        <tissue>Erythroleukemia</tissue>
    </source>
</reference>
<reference key="11">
    <citation type="journal article" date="2014" name="J. Proteomics">
        <title>An enzyme assisted RP-RPLC approach for in-depth analysis of human liver phosphoproteome.</title>
        <authorList>
            <person name="Bian Y."/>
            <person name="Song C."/>
            <person name="Cheng K."/>
            <person name="Dong M."/>
            <person name="Wang F."/>
            <person name="Huang J."/>
            <person name="Sun D."/>
            <person name="Wang L."/>
            <person name="Ye M."/>
            <person name="Zou H."/>
        </authorList>
    </citation>
    <scope>PHOSPHORYLATION [LARGE SCALE ANALYSIS] AT SER-566</scope>
    <scope>IDENTIFICATION BY MASS SPECTROMETRY [LARGE SCALE ANALYSIS]</scope>
    <source>
        <tissue>Liver</tissue>
    </source>
</reference>
<reference key="12">
    <citation type="journal article" date="2005" name="J. Med. Genet.">
        <title>Homozygous mutations in LPIN2 are responsible for the syndrome of chronic recurrent multifocal osteomyelitis and congenital dyserythropoietic anaemia (Majeed syndrome).</title>
        <authorList>
            <person name="Ferguson P.J."/>
            <person name="Chen S."/>
            <person name="Tayeh M.K."/>
            <person name="Ochoa L."/>
            <person name="Leal S.M."/>
            <person name="Pelet A."/>
            <person name="Munnich A."/>
            <person name="Lyonnet S."/>
            <person name="Majeed H.A."/>
            <person name="El-Shanti H."/>
        </authorList>
    </citation>
    <scope>VARIANT MJDS LEU-734</scope>
    <scope>TISSUE SPECIFICITY</scope>
</reference>
<sequence>MNYVGQLAGQVIVTVKELYKGINQATLSGCIDVIVVQQQDGSYQCSPFHVRFGKLGVLRSKEKVIDIEINGSAVDLHMKLGDNGEAFFVEETEEEYEKLPAYLATSPIPTEDQFFKDIDTPLVKSGGDETPSQSSDISHVLETETIFTPSSVKKKKRRRKKYKQDSKKEEQAASAAAEDTCDVGVSSDDDKGAQAARGSSNASLKEEECKEPLLFHSGDHYPLSDGDWSPLETTYPQTACPKSDSELEVKPAESLLRSESHMEWTWGGFPESTKVSKRERSDHHPRTATITPSENTHFRVIPSEDNLISEVEKDASMEDTVCTIVKPKPRALGTQMSDPTSVAELLEPPLESTQISSMLDADHLPNAALAEAPSESKPAAKVDSPSKKKGVHKRSQHQGPDDIYLDDLKGLEPEVAALYFPKSESEPGSRQWPESDTLSGSQSPQSVGSAAADSGTECLSDSAMDLPDVTLSLCGGLSENGEISKEKFMEHIITYHEFAENPGLIDNPNLVIRIYNRYYNWALAAPMILSLQVFQKSLPKATVESWVKDKMPKKSGRWWFWRKRESMTKQLPESKEGKSEAPPASDLPSSSKEPAGARPAENDSSSDEGSQELEESITVDPIPTEPLSHGSTTSYKKSLRLSSDQIAKLKLHDGPNDVVFSITTQYQGTCRCAGTIYLWNWNDKIIISDIDGTITKSDALGQILPQLGKDWTHQGIAKLYHSINENGYKFLYCSARAIGMADMTRGYLHWVNDKGTILPRGPLMLSPSSLFSAFHREVIEKKPEKFKIECLNDIKNLFAPSKQPFYAAFGNRPNDVYAYTQVGVPDCRIFTVNPKGELIQERTKGNKSSYHRLSELVEHVFPLLSKEQNSAFPCPEFSSFCYWRDPIPEVDLDDLS</sequence>
<feature type="chain" id="PRO_0000209881" description="Phosphatidate phosphatase LPIN2">
    <location>
        <begin position="1"/>
        <end position="896"/>
    </location>
</feature>
<feature type="region of interest" description="N-LIP">
    <location>
        <begin position="1"/>
        <end position="108"/>
    </location>
</feature>
<feature type="region of interest" description="Disordered" evidence="4">
    <location>
        <begin position="120"/>
        <end position="208"/>
    </location>
</feature>
<feature type="region of interest" description="Disordered" evidence="4">
    <location>
        <begin position="370"/>
        <end position="405"/>
    </location>
</feature>
<feature type="region of interest" description="Disordered" evidence="4">
    <location>
        <begin position="420"/>
        <end position="459"/>
    </location>
</feature>
<feature type="region of interest" description="Disordered" evidence="4">
    <location>
        <begin position="569"/>
        <end position="636"/>
    </location>
</feature>
<feature type="region of interest" description="C-LIP">
    <location>
        <begin position="635"/>
        <end position="837"/>
    </location>
</feature>
<feature type="short sequence motif" description="Nuclear localization signal" evidence="3">
    <location>
        <begin position="153"/>
        <end position="158"/>
    </location>
</feature>
<feature type="short sequence motif" description="DXDXT motif">
    <location>
        <begin position="689"/>
        <end position="693"/>
    </location>
</feature>
<feature type="short sequence motif" description="LXXIL motif">
    <location>
        <begin position="700"/>
        <end position="704"/>
    </location>
</feature>
<feature type="compositionally biased region" description="Basic residues" evidence="4">
    <location>
        <begin position="152"/>
        <end position="162"/>
    </location>
</feature>
<feature type="compositionally biased region" description="Basic residues" evidence="4">
    <location>
        <begin position="387"/>
        <end position="396"/>
    </location>
</feature>
<feature type="compositionally biased region" description="Polar residues" evidence="4">
    <location>
        <begin position="426"/>
        <end position="448"/>
    </location>
</feature>
<feature type="compositionally biased region" description="Basic and acidic residues" evidence="4">
    <location>
        <begin position="569"/>
        <end position="579"/>
    </location>
</feature>
<feature type="compositionally biased region" description="Acidic residues" evidence="4">
    <location>
        <begin position="604"/>
        <end position="617"/>
    </location>
</feature>
<feature type="modified residue" description="Phosphoserine" evidence="9">
    <location>
        <position position="106"/>
    </location>
</feature>
<feature type="modified residue" description="Phosphoserine" evidence="2">
    <location>
        <position position="174"/>
    </location>
</feature>
<feature type="modified residue" description="Phosphoserine" evidence="2">
    <location>
        <position position="186"/>
    </location>
</feature>
<feature type="modified residue" description="Phosphoserine" evidence="2">
    <location>
        <position position="187"/>
    </location>
</feature>
<feature type="modified residue" description="Phosphoserine" evidence="9">
    <location>
        <position position="243"/>
    </location>
</feature>
<feature type="modified residue" description="Phosphoserine" evidence="9">
    <location>
        <position position="303"/>
    </location>
</feature>
<feature type="modified residue" description="Phosphoserine" evidence="10">
    <location>
        <position position="566"/>
    </location>
</feature>
<feature type="sequence variant" id="VAR_023817" description="In MJDS; dbSNP:rs80338807." evidence="5">
    <original>S</original>
    <variation>L</variation>
    <location>
        <position position="734"/>
    </location>
</feature>
<gene>
    <name evidence="8" type="primary">LPIN2</name>
    <name type="synonym">KIAA0249</name>
</gene>
<evidence type="ECO:0000250" key="1"/>
<evidence type="ECO:0000250" key="2">
    <source>
        <dbReference type="UniProtKB" id="Q99PI5"/>
    </source>
</evidence>
<evidence type="ECO:0000255" key="3"/>
<evidence type="ECO:0000256" key="4">
    <source>
        <dbReference type="SAM" id="MobiDB-lite"/>
    </source>
</evidence>
<evidence type="ECO:0000269" key="5">
    <source>
    </source>
</evidence>
<evidence type="ECO:0000269" key="6">
    <source>
    </source>
</evidence>
<evidence type="ECO:0000305" key="7"/>
<evidence type="ECO:0000312" key="8">
    <source>
        <dbReference type="HGNC" id="HGNC:14450"/>
    </source>
</evidence>
<evidence type="ECO:0007744" key="9">
    <source>
    </source>
</evidence>
<evidence type="ECO:0007744" key="10">
    <source>
    </source>
</evidence>
<keyword id="KW-1055">Congenital dyserythropoietic anemia</keyword>
<keyword id="KW-0963">Cytoplasm</keyword>
<keyword id="KW-0225">Disease variant</keyword>
<keyword id="KW-0256">Endoplasmic reticulum</keyword>
<keyword id="KW-0276">Fatty acid metabolism</keyword>
<keyword id="KW-0360">Hereditary hemolytic anemia</keyword>
<keyword id="KW-0378">Hydrolase</keyword>
<keyword id="KW-0443">Lipid metabolism</keyword>
<keyword id="KW-0472">Membrane</keyword>
<keyword id="KW-0539">Nucleus</keyword>
<keyword id="KW-0597">Phosphoprotein</keyword>
<keyword id="KW-1267">Proteomics identification</keyword>
<keyword id="KW-1185">Reference proteome</keyword>
<keyword id="KW-0804">Transcription</keyword>
<keyword id="KW-0805">Transcription regulation</keyword>
<accession>Q92539</accession>
<accession>A7MD25</accession>
<accession>D3DUH3</accession>
<organism>
    <name type="scientific">Homo sapiens</name>
    <name type="common">Human</name>
    <dbReference type="NCBI Taxonomy" id="9606"/>
    <lineage>
        <taxon>Eukaryota</taxon>
        <taxon>Metazoa</taxon>
        <taxon>Chordata</taxon>
        <taxon>Craniata</taxon>
        <taxon>Vertebrata</taxon>
        <taxon>Euteleostomi</taxon>
        <taxon>Mammalia</taxon>
        <taxon>Eutheria</taxon>
        <taxon>Euarchontoglires</taxon>
        <taxon>Primates</taxon>
        <taxon>Haplorrhini</taxon>
        <taxon>Catarrhini</taxon>
        <taxon>Hominidae</taxon>
        <taxon>Homo</taxon>
    </lineage>
</organism>
<proteinExistence type="evidence at protein level"/>
<protein>
    <recommendedName>
        <fullName evidence="7">Phosphatidate phosphatase LPIN2</fullName>
        <ecNumber evidence="2">3.1.3.4</ecNumber>
    </recommendedName>
    <alternativeName>
        <fullName evidence="2">Lipin-2</fullName>
    </alternativeName>
</protein>
<dbReference type="EC" id="3.1.3.4" evidence="2"/>
<dbReference type="EMBL" id="D87436">
    <property type="protein sequence ID" value="BAA13380.2"/>
    <property type="status" value="ALT_INIT"/>
    <property type="molecule type" value="mRNA"/>
</dbReference>
<dbReference type="EMBL" id="CH471113">
    <property type="protein sequence ID" value="EAX01686.1"/>
    <property type="molecule type" value="Genomic_DNA"/>
</dbReference>
<dbReference type="EMBL" id="CH471113">
    <property type="protein sequence ID" value="EAX01687.1"/>
    <property type="molecule type" value="Genomic_DNA"/>
</dbReference>
<dbReference type="EMBL" id="BC152448">
    <property type="protein sequence ID" value="AAI52449.1"/>
    <property type="molecule type" value="mRNA"/>
</dbReference>
<dbReference type="CCDS" id="CCDS11829.1"/>
<dbReference type="RefSeq" id="NP_001362737.1">
    <property type="nucleotide sequence ID" value="NM_001375808.2"/>
</dbReference>
<dbReference type="RefSeq" id="NP_001362738.1">
    <property type="nucleotide sequence ID" value="NM_001375809.1"/>
</dbReference>
<dbReference type="RefSeq" id="NP_055461.1">
    <property type="nucleotide sequence ID" value="NM_014646.2"/>
</dbReference>
<dbReference type="RefSeq" id="XP_005258235.1">
    <property type="nucleotide sequence ID" value="XM_005258178.3"/>
</dbReference>
<dbReference type="RefSeq" id="XP_005258236.1">
    <property type="nucleotide sequence ID" value="XM_005258179.4"/>
</dbReference>
<dbReference type="RefSeq" id="XP_016881587.1">
    <property type="nucleotide sequence ID" value="XM_017026098.1"/>
</dbReference>
<dbReference type="RefSeq" id="XP_016881588.1">
    <property type="nucleotide sequence ID" value="XM_017026099.2"/>
</dbReference>
<dbReference type="RefSeq" id="XP_047293915.1">
    <property type="nucleotide sequence ID" value="XM_047437959.1"/>
</dbReference>
<dbReference type="RefSeq" id="XP_054175368.1">
    <property type="nucleotide sequence ID" value="XM_054319393.1"/>
</dbReference>
<dbReference type="SMR" id="Q92539"/>
<dbReference type="BioGRID" id="115019">
    <property type="interactions" value="28"/>
</dbReference>
<dbReference type="FunCoup" id="Q92539">
    <property type="interactions" value="2860"/>
</dbReference>
<dbReference type="IntAct" id="Q92539">
    <property type="interactions" value="14"/>
</dbReference>
<dbReference type="STRING" id="9606.ENSP00000261596"/>
<dbReference type="DEPOD" id="LPIN2"/>
<dbReference type="iPTMnet" id="Q92539"/>
<dbReference type="PhosphoSitePlus" id="Q92539"/>
<dbReference type="BioMuta" id="LPIN2"/>
<dbReference type="DMDM" id="2495724"/>
<dbReference type="jPOST" id="Q92539"/>
<dbReference type="MassIVE" id="Q92539"/>
<dbReference type="PaxDb" id="9606-ENSP00000261596"/>
<dbReference type="PeptideAtlas" id="Q92539"/>
<dbReference type="ProteomicsDB" id="75297"/>
<dbReference type="Pumba" id="Q92539"/>
<dbReference type="Antibodypedia" id="2826">
    <property type="antibodies" value="195 antibodies from 33 providers"/>
</dbReference>
<dbReference type="DNASU" id="9663"/>
<dbReference type="Ensembl" id="ENST00000261596.9">
    <property type="protein sequence ID" value="ENSP00000261596.4"/>
    <property type="gene ID" value="ENSG00000101577.11"/>
</dbReference>
<dbReference type="Ensembl" id="ENST00000677752.1">
    <property type="protein sequence ID" value="ENSP00000504857.1"/>
    <property type="gene ID" value="ENSG00000101577.11"/>
</dbReference>
<dbReference type="Ensembl" id="ENST00000697040.1">
    <property type="protein sequence ID" value="ENSP00000513062.1"/>
    <property type="gene ID" value="ENSG00000101577.11"/>
</dbReference>
<dbReference type="GeneID" id="9663"/>
<dbReference type="KEGG" id="hsa:9663"/>
<dbReference type="MANE-Select" id="ENST00000677752.1">
    <property type="protein sequence ID" value="ENSP00000504857.1"/>
    <property type="RefSeq nucleotide sequence ID" value="NM_001375808.2"/>
    <property type="RefSeq protein sequence ID" value="NP_001362737.1"/>
</dbReference>
<dbReference type="UCSC" id="uc002klo.3">
    <property type="organism name" value="human"/>
</dbReference>
<dbReference type="AGR" id="HGNC:14450"/>
<dbReference type="CTD" id="9663"/>
<dbReference type="DisGeNET" id="9663"/>
<dbReference type="GeneCards" id="LPIN2"/>
<dbReference type="GeneReviews" id="LPIN2"/>
<dbReference type="HGNC" id="HGNC:14450">
    <property type="gene designation" value="LPIN2"/>
</dbReference>
<dbReference type="HPA" id="ENSG00000101577">
    <property type="expression patterns" value="Tissue enhanced (liver)"/>
</dbReference>
<dbReference type="MalaCards" id="LPIN2"/>
<dbReference type="MIM" id="605519">
    <property type="type" value="gene"/>
</dbReference>
<dbReference type="MIM" id="609628">
    <property type="type" value="phenotype"/>
</dbReference>
<dbReference type="neXtProt" id="NX_Q92539"/>
<dbReference type="OpenTargets" id="ENSG00000101577"/>
<dbReference type="Orphanet" id="77297">
    <property type="disease" value="Majeed syndrome"/>
</dbReference>
<dbReference type="PharmGKB" id="PA30437"/>
<dbReference type="VEuPathDB" id="HostDB:ENSG00000101577"/>
<dbReference type="eggNOG" id="KOG2116">
    <property type="taxonomic scope" value="Eukaryota"/>
</dbReference>
<dbReference type="GeneTree" id="ENSGT00940000156313"/>
<dbReference type="HOGENOM" id="CLU_002546_0_1_1"/>
<dbReference type="InParanoid" id="Q92539"/>
<dbReference type="OMA" id="NFCTEHI"/>
<dbReference type="OrthoDB" id="4567at2759"/>
<dbReference type="PAN-GO" id="Q92539">
    <property type="GO annotations" value="9 GO annotations based on evolutionary models"/>
</dbReference>
<dbReference type="PhylomeDB" id="Q92539"/>
<dbReference type="TreeFam" id="TF314095"/>
<dbReference type="PathwayCommons" id="Q92539"/>
<dbReference type="Reactome" id="R-HSA-1483191">
    <property type="pathway name" value="Synthesis of PC"/>
</dbReference>
<dbReference type="Reactome" id="R-HSA-1483213">
    <property type="pathway name" value="Synthesis of PE"/>
</dbReference>
<dbReference type="Reactome" id="R-HSA-4419969">
    <property type="pathway name" value="Depolymerization of the Nuclear Lamina"/>
</dbReference>
<dbReference type="Reactome" id="R-HSA-75109">
    <property type="pathway name" value="Triglyceride biosynthesis"/>
</dbReference>
<dbReference type="SignaLink" id="Q92539"/>
<dbReference type="BioGRID-ORCS" id="9663">
    <property type="hits" value="11 hits in 1171 CRISPR screens"/>
</dbReference>
<dbReference type="ChiTaRS" id="LPIN2">
    <property type="organism name" value="human"/>
</dbReference>
<dbReference type="GenomeRNAi" id="9663"/>
<dbReference type="Pharos" id="Q92539">
    <property type="development level" value="Tbio"/>
</dbReference>
<dbReference type="PRO" id="PR:Q92539"/>
<dbReference type="Proteomes" id="UP000005640">
    <property type="component" value="Chromosome 18"/>
</dbReference>
<dbReference type="RNAct" id="Q92539">
    <property type="molecule type" value="protein"/>
</dbReference>
<dbReference type="Bgee" id="ENSG00000101577">
    <property type="expression patterns" value="Expressed in jejunal mucosa and 194 other cell types or tissues"/>
</dbReference>
<dbReference type="ExpressionAtlas" id="Q92539">
    <property type="expression patterns" value="baseline and differential"/>
</dbReference>
<dbReference type="GO" id="GO:0005829">
    <property type="term" value="C:cytosol"/>
    <property type="evidence" value="ECO:0000318"/>
    <property type="project" value="GO_Central"/>
</dbReference>
<dbReference type="GO" id="GO:0005789">
    <property type="term" value="C:endoplasmic reticulum membrane"/>
    <property type="evidence" value="ECO:0000318"/>
    <property type="project" value="GO_Central"/>
</dbReference>
<dbReference type="GO" id="GO:0005634">
    <property type="term" value="C:nucleus"/>
    <property type="evidence" value="ECO:0000318"/>
    <property type="project" value="GO_Central"/>
</dbReference>
<dbReference type="GO" id="GO:0008195">
    <property type="term" value="F:phosphatidate phosphatase activity"/>
    <property type="evidence" value="ECO:0000269"/>
    <property type="project" value="Reactome"/>
</dbReference>
<dbReference type="GO" id="GO:0003713">
    <property type="term" value="F:transcription coactivator activity"/>
    <property type="evidence" value="ECO:0000250"/>
    <property type="project" value="UniProtKB"/>
</dbReference>
<dbReference type="GO" id="GO:0032869">
    <property type="term" value="P:cellular response to insulin stimulus"/>
    <property type="evidence" value="ECO:0000318"/>
    <property type="project" value="GO_Central"/>
</dbReference>
<dbReference type="GO" id="GO:0009062">
    <property type="term" value="P:fatty acid catabolic process"/>
    <property type="evidence" value="ECO:0000318"/>
    <property type="project" value="GO_Central"/>
</dbReference>
<dbReference type="GO" id="GO:0006629">
    <property type="term" value="P:lipid metabolic process"/>
    <property type="evidence" value="ECO:0000250"/>
    <property type="project" value="UniProtKB"/>
</dbReference>
<dbReference type="GO" id="GO:0045944">
    <property type="term" value="P:positive regulation of transcription by RNA polymerase II"/>
    <property type="evidence" value="ECO:0000250"/>
    <property type="project" value="UniProtKB"/>
</dbReference>
<dbReference type="GO" id="GO:0019432">
    <property type="term" value="P:triglyceride biosynthetic process"/>
    <property type="evidence" value="ECO:0000318"/>
    <property type="project" value="GO_Central"/>
</dbReference>
<dbReference type="InterPro" id="IPR036412">
    <property type="entry name" value="HAD-like_sf"/>
</dbReference>
<dbReference type="InterPro" id="IPR026058">
    <property type="entry name" value="LIPIN"/>
</dbReference>
<dbReference type="InterPro" id="IPR031703">
    <property type="entry name" value="Lipin_mid"/>
</dbReference>
<dbReference type="InterPro" id="IPR007651">
    <property type="entry name" value="Lipin_N"/>
</dbReference>
<dbReference type="InterPro" id="IPR013209">
    <property type="entry name" value="LNS2"/>
</dbReference>
<dbReference type="InterPro" id="IPR031315">
    <property type="entry name" value="LNS2/PITP"/>
</dbReference>
<dbReference type="PANTHER" id="PTHR12181">
    <property type="entry name" value="LIPIN"/>
    <property type="match status" value="1"/>
</dbReference>
<dbReference type="PANTHER" id="PTHR12181:SF11">
    <property type="entry name" value="PHOSPHATIDATE PHOSPHATASE LPIN2"/>
    <property type="match status" value="1"/>
</dbReference>
<dbReference type="Pfam" id="PF16876">
    <property type="entry name" value="Lipin_mid"/>
    <property type="match status" value="1"/>
</dbReference>
<dbReference type="Pfam" id="PF04571">
    <property type="entry name" value="Lipin_N"/>
    <property type="match status" value="1"/>
</dbReference>
<dbReference type="Pfam" id="PF08235">
    <property type="entry name" value="LNS2"/>
    <property type="match status" value="1"/>
</dbReference>
<dbReference type="SMART" id="SM00775">
    <property type="entry name" value="LNS2"/>
    <property type="match status" value="1"/>
</dbReference>
<dbReference type="SUPFAM" id="SSF56784">
    <property type="entry name" value="HAD-like"/>
    <property type="match status" value="1"/>
</dbReference>
<comment type="function">
    <text evidence="2">Acts as a magnesium-dependent phosphatidate phosphatase enzyme which catalyzes the conversion of phosphatidic acid to diacylglycerol during triglyceride, phosphatidylcholine and phosphatidylethanolamine biosynthesis in the endoplasmic reticulum membrane. Plays important roles in controlling the metabolism of fatty acids at different levels. Also acts as a nuclear transcriptional coactivator for PPARGC1A to modulate lipid metabolism.</text>
</comment>
<comment type="catalytic activity">
    <reaction evidence="2">
        <text>a 1,2-diacyl-sn-glycero-3-phosphate + H2O = a 1,2-diacyl-sn-glycerol + phosphate</text>
        <dbReference type="Rhea" id="RHEA:27429"/>
        <dbReference type="ChEBI" id="CHEBI:15377"/>
        <dbReference type="ChEBI" id="CHEBI:17815"/>
        <dbReference type="ChEBI" id="CHEBI:43474"/>
        <dbReference type="ChEBI" id="CHEBI:58608"/>
        <dbReference type="EC" id="3.1.3.4"/>
    </reaction>
    <physiologicalReaction direction="left-to-right" evidence="2">
        <dbReference type="Rhea" id="RHEA:27430"/>
    </physiologicalReaction>
</comment>
<comment type="cofactor">
    <cofactor evidence="1">
        <name>Mg(2+)</name>
        <dbReference type="ChEBI" id="CHEBI:18420"/>
    </cofactor>
</comment>
<comment type="activity regulation">
    <text evidence="1">Inhibited by N-ethylmaleimide.</text>
</comment>
<comment type="subcellular location">
    <subcellularLocation>
        <location evidence="1">Nucleus</location>
    </subcellularLocation>
    <subcellularLocation>
        <location evidence="1">Cytoplasm</location>
        <location evidence="1">Cytosol</location>
    </subcellularLocation>
    <subcellularLocation>
        <location evidence="1">Endoplasmic reticulum membrane</location>
    </subcellularLocation>
    <text evidence="1">Translocates to endoplasmic reticulum membrane with increasing levels of oleate.</text>
</comment>
<comment type="tissue specificity">
    <text evidence="5 6">Expressed in liver, lung, kidney, placenta, spleen, thymus, lymph node, prostate, testes, small intestine, and colon.</text>
</comment>
<comment type="domain">
    <text evidence="1">Contains 1 Asp-Xaa-Asp-Xaa-Thr (DXDXT) motif, a catalytic motif known to be essential for phosphatidate phosphatase activity.</text>
</comment>
<comment type="domain">
    <text evidence="1">Contains one Leu-Xaa-Xaa-Ile-Leu (LXXIL) motif, a motif known to be a transcriptional binding motif.</text>
</comment>
<comment type="disease" evidence="5">
    <disease id="DI-01926">
        <name>Majeed syndrome</name>
        <acronym>MJDS</acronym>
        <description>An autosomal recessive syndrome characterized by chronic recurrent multifocal osteomyelitis that is of early onset with a lifelong course, congenital dyserythropoietic anemia that presents as hypochromic, microcytic anemia during the first year of life and ranges from mild to transfusion-dependent, and transient inflammatory dermatosis, often manifesting as Sweet syndrome (neutrophilic skin infiltration).</description>
        <dbReference type="MIM" id="609628"/>
    </disease>
    <text>The disease is caused by variants affecting the gene represented in this entry.</text>
</comment>
<comment type="similarity">
    <text evidence="7">Belongs to the lipin family.</text>
</comment>
<comment type="sequence caution" evidence="7">
    <conflict type="erroneous initiation">
        <sequence resource="EMBL-CDS" id="BAA13380"/>
    </conflict>
</comment>
<comment type="online information" name="INFEVERS">
    <link uri="https://infevers.umai-montpellier.fr/web/search.php?n=7"/>
    <text>Repertory of FMF and hereditary autoinflammatory disorders mutations</text>
</comment>
<name>LPIN2_HUMAN</name>